<organism>
    <name type="scientific">Solidesulfovibrio magneticus (strain ATCC 700980 / DSM 13731 / RS-1)</name>
    <name type="common">Desulfovibrio magneticus</name>
    <dbReference type="NCBI Taxonomy" id="573370"/>
    <lineage>
        <taxon>Bacteria</taxon>
        <taxon>Pseudomonadati</taxon>
        <taxon>Thermodesulfobacteriota</taxon>
        <taxon>Desulfovibrionia</taxon>
        <taxon>Desulfovibrionales</taxon>
        <taxon>Desulfovibrionaceae</taxon>
        <taxon>Solidesulfovibrio</taxon>
    </lineage>
</organism>
<comment type="similarity">
    <text evidence="1">Belongs to the bacterial ribosomal protein bS16 family.</text>
</comment>
<gene>
    <name evidence="1" type="primary">rpsP</name>
    <name type="ordered locus">DMR_34700</name>
</gene>
<sequence length="79" mass="9018">MAMKLRLTRMGCKKRPFYRIVAMNSETRRDGRALEYLGYYNPMVDPAEIKVDGDKVRAWLARGAEPTDTVRALLQKAGV</sequence>
<protein>
    <recommendedName>
        <fullName evidence="1">Small ribosomal subunit protein bS16</fullName>
    </recommendedName>
    <alternativeName>
        <fullName evidence="2">30S ribosomal protein S16</fullName>
    </alternativeName>
</protein>
<name>RS16_SOLM1</name>
<accession>C4XKM1</accession>
<dbReference type="EMBL" id="AP010904">
    <property type="protein sequence ID" value="BAH76961.1"/>
    <property type="molecule type" value="Genomic_DNA"/>
</dbReference>
<dbReference type="RefSeq" id="WP_006922265.1">
    <property type="nucleotide sequence ID" value="NC_012796.1"/>
</dbReference>
<dbReference type="SMR" id="C4XKM1"/>
<dbReference type="STRING" id="573370.DMR_34700"/>
<dbReference type="KEGG" id="dma:DMR_34700"/>
<dbReference type="eggNOG" id="COG0228">
    <property type="taxonomic scope" value="Bacteria"/>
</dbReference>
<dbReference type="HOGENOM" id="CLU_100590_5_0_7"/>
<dbReference type="OrthoDB" id="9807878at2"/>
<dbReference type="Proteomes" id="UP000009071">
    <property type="component" value="Chromosome"/>
</dbReference>
<dbReference type="GO" id="GO:0005737">
    <property type="term" value="C:cytoplasm"/>
    <property type="evidence" value="ECO:0007669"/>
    <property type="project" value="UniProtKB-ARBA"/>
</dbReference>
<dbReference type="GO" id="GO:0015935">
    <property type="term" value="C:small ribosomal subunit"/>
    <property type="evidence" value="ECO:0007669"/>
    <property type="project" value="TreeGrafter"/>
</dbReference>
<dbReference type="GO" id="GO:0003735">
    <property type="term" value="F:structural constituent of ribosome"/>
    <property type="evidence" value="ECO:0007669"/>
    <property type="project" value="InterPro"/>
</dbReference>
<dbReference type="GO" id="GO:0006412">
    <property type="term" value="P:translation"/>
    <property type="evidence" value="ECO:0007669"/>
    <property type="project" value="UniProtKB-UniRule"/>
</dbReference>
<dbReference type="Gene3D" id="3.30.1320.10">
    <property type="match status" value="1"/>
</dbReference>
<dbReference type="HAMAP" id="MF_00385">
    <property type="entry name" value="Ribosomal_bS16"/>
    <property type="match status" value="1"/>
</dbReference>
<dbReference type="InterPro" id="IPR000307">
    <property type="entry name" value="Ribosomal_bS16"/>
</dbReference>
<dbReference type="InterPro" id="IPR023803">
    <property type="entry name" value="Ribosomal_bS16_dom_sf"/>
</dbReference>
<dbReference type="NCBIfam" id="TIGR00002">
    <property type="entry name" value="S16"/>
    <property type="match status" value="1"/>
</dbReference>
<dbReference type="PANTHER" id="PTHR12919">
    <property type="entry name" value="30S RIBOSOMAL PROTEIN S16"/>
    <property type="match status" value="1"/>
</dbReference>
<dbReference type="PANTHER" id="PTHR12919:SF20">
    <property type="entry name" value="SMALL RIBOSOMAL SUBUNIT PROTEIN BS16M"/>
    <property type="match status" value="1"/>
</dbReference>
<dbReference type="Pfam" id="PF00886">
    <property type="entry name" value="Ribosomal_S16"/>
    <property type="match status" value="1"/>
</dbReference>
<dbReference type="SUPFAM" id="SSF54565">
    <property type="entry name" value="Ribosomal protein S16"/>
    <property type="match status" value="1"/>
</dbReference>
<keyword id="KW-0687">Ribonucleoprotein</keyword>
<keyword id="KW-0689">Ribosomal protein</keyword>
<feature type="chain" id="PRO_1000205755" description="Small ribosomal subunit protein bS16">
    <location>
        <begin position="1"/>
        <end position="79"/>
    </location>
</feature>
<proteinExistence type="inferred from homology"/>
<reference key="1">
    <citation type="journal article" date="2009" name="Genome Res.">
        <title>Whole genome sequence of Desulfovibrio magneticus strain RS-1 revealed common gene clusters in magnetotactic bacteria.</title>
        <authorList>
            <person name="Nakazawa H."/>
            <person name="Arakaki A."/>
            <person name="Narita-Yamada S."/>
            <person name="Yashiro I."/>
            <person name="Jinno K."/>
            <person name="Aoki N."/>
            <person name="Tsuruyama A."/>
            <person name="Okamura Y."/>
            <person name="Tanikawa S."/>
            <person name="Fujita N."/>
            <person name="Takeyama H."/>
            <person name="Matsunaga T."/>
        </authorList>
    </citation>
    <scope>NUCLEOTIDE SEQUENCE [LARGE SCALE GENOMIC DNA]</scope>
    <source>
        <strain>ATCC 700980 / DSM 13731 / RS-1</strain>
    </source>
</reference>
<evidence type="ECO:0000255" key="1">
    <source>
        <dbReference type="HAMAP-Rule" id="MF_00385"/>
    </source>
</evidence>
<evidence type="ECO:0000305" key="2"/>